<accession>Q7NK94</accession>
<comment type="function">
    <text evidence="1">NDH-1 shuttles electrons from an unknown electron donor, via FMN and iron-sulfur (Fe-S) centers, to quinones in the respiratory and/or the photosynthetic chain. The immediate electron acceptor for the enzyme in this species is believed to be plastoquinone. Couples the redox reaction to proton translocation, and thus conserves the redox energy in a proton gradient.</text>
</comment>
<comment type="catalytic activity">
    <reaction evidence="1">
        <text>a plastoquinone + NADH + (n+1) H(+)(in) = a plastoquinol + NAD(+) + n H(+)(out)</text>
        <dbReference type="Rhea" id="RHEA:42608"/>
        <dbReference type="Rhea" id="RHEA-COMP:9561"/>
        <dbReference type="Rhea" id="RHEA-COMP:9562"/>
        <dbReference type="ChEBI" id="CHEBI:15378"/>
        <dbReference type="ChEBI" id="CHEBI:17757"/>
        <dbReference type="ChEBI" id="CHEBI:57540"/>
        <dbReference type="ChEBI" id="CHEBI:57945"/>
        <dbReference type="ChEBI" id="CHEBI:62192"/>
    </reaction>
</comment>
<comment type="catalytic activity">
    <reaction evidence="1">
        <text>a plastoquinone + NADPH + (n+1) H(+)(in) = a plastoquinol + NADP(+) + n H(+)(out)</text>
        <dbReference type="Rhea" id="RHEA:42612"/>
        <dbReference type="Rhea" id="RHEA-COMP:9561"/>
        <dbReference type="Rhea" id="RHEA-COMP:9562"/>
        <dbReference type="ChEBI" id="CHEBI:15378"/>
        <dbReference type="ChEBI" id="CHEBI:17757"/>
        <dbReference type="ChEBI" id="CHEBI:57783"/>
        <dbReference type="ChEBI" id="CHEBI:58349"/>
        <dbReference type="ChEBI" id="CHEBI:62192"/>
    </reaction>
</comment>
<comment type="subunit">
    <text evidence="1">NDH-1 is composed of at least 11 different subunits.</text>
</comment>
<comment type="subcellular location">
    <subcellularLocation>
        <location evidence="1">Cell inner membrane</location>
        <topology evidence="1">Multi-pass membrane protein</topology>
    </subcellularLocation>
</comment>
<comment type="similarity">
    <text evidence="1">Belongs to the complex I subunit 1 family.</text>
</comment>
<name>NU1C_GLOVI</name>
<reference key="1">
    <citation type="journal article" date="2003" name="DNA Res.">
        <title>Complete genome structure of Gloeobacter violaceus PCC 7421, a cyanobacterium that lacks thylakoids.</title>
        <authorList>
            <person name="Nakamura Y."/>
            <person name="Kaneko T."/>
            <person name="Sato S."/>
            <person name="Mimuro M."/>
            <person name="Miyashita H."/>
            <person name="Tsuchiya T."/>
            <person name="Sasamoto S."/>
            <person name="Watanabe A."/>
            <person name="Kawashima K."/>
            <person name="Kishida Y."/>
            <person name="Kiyokawa C."/>
            <person name="Kohara M."/>
            <person name="Matsumoto M."/>
            <person name="Matsuno A."/>
            <person name="Nakazaki N."/>
            <person name="Shimpo S."/>
            <person name="Takeuchi C."/>
            <person name="Yamada M."/>
            <person name="Tabata S."/>
        </authorList>
    </citation>
    <scope>NUCLEOTIDE SEQUENCE [LARGE SCALE GENOMIC DNA]</scope>
    <source>
        <strain>ATCC 29082 / PCC 7421</strain>
    </source>
</reference>
<organism>
    <name type="scientific">Gloeobacter violaceus (strain ATCC 29082 / PCC 7421)</name>
    <dbReference type="NCBI Taxonomy" id="251221"/>
    <lineage>
        <taxon>Bacteria</taxon>
        <taxon>Bacillati</taxon>
        <taxon>Cyanobacteriota</taxon>
        <taxon>Cyanophyceae</taxon>
        <taxon>Gloeobacterales</taxon>
        <taxon>Gloeobacteraceae</taxon>
        <taxon>Gloeobacter</taxon>
    </lineage>
</organism>
<proteinExistence type="inferred from homology"/>
<gene>
    <name evidence="1" type="primary">ndhA</name>
    <name type="ordered locus">gll1584</name>
</gene>
<sequence length="407" mass="43835">MEGIDLGNAFAQSLSGLGVPADVARALWLPLPMIVILLTVTVGVIAAVWGERKWSGMMQQRMGPTIIGLGGSIQGAADGVKLLVKEDIIPVKADPWLFTLGPAIVIIPVFFSYLVIPFGQGLVLSDITIGIFFIIAVASISPIGALMAGYASNNKYALLGGLRAAAQSISYEIPLALSVLAIVMMSSSLSTVDIVEQQETLGLFSFFSWNIWRQPIGFVIFLISALAETERAPFDLPEAESELVAGHHTEYTGMKFALFYLSEYANLILASLIASVLFLGGWSFIVPLEPLAALFGIEASNPIFQVVNALVGISVTILKATFFVFLAILARWTLPRVRIDQLLDLGWKFLLPVSLFNLLLTAALVLLSNTLKTTLPLYLPLIIFVGLVFVAMSLQKRPAAKPTAARA</sequence>
<evidence type="ECO:0000255" key="1">
    <source>
        <dbReference type="HAMAP-Rule" id="MF_01350"/>
    </source>
</evidence>
<keyword id="KW-0997">Cell inner membrane</keyword>
<keyword id="KW-1003">Cell membrane</keyword>
<keyword id="KW-0472">Membrane</keyword>
<keyword id="KW-0520">NAD</keyword>
<keyword id="KW-0521">NADP</keyword>
<keyword id="KW-0618">Plastoquinone</keyword>
<keyword id="KW-0874">Quinone</keyword>
<keyword id="KW-1185">Reference proteome</keyword>
<keyword id="KW-1278">Translocase</keyword>
<keyword id="KW-0812">Transmembrane</keyword>
<keyword id="KW-1133">Transmembrane helix</keyword>
<dbReference type="EC" id="7.1.1.-" evidence="1"/>
<dbReference type="EMBL" id="BA000045">
    <property type="protein sequence ID" value="BAC89525.1"/>
    <property type="molecule type" value="Genomic_DNA"/>
</dbReference>
<dbReference type="RefSeq" id="NP_924530.1">
    <property type="nucleotide sequence ID" value="NC_005125.1"/>
</dbReference>
<dbReference type="RefSeq" id="WP_011141583.1">
    <property type="nucleotide sequence ID" value="NC_005125.1"/>
</dbReference>
<dbReference type="SMR" id="Q7NK94"/>
<dbReference type="FunCoup" id="Q7NK94">
    <property type="interactions" value="62"/>
</dbReference>
<dbReference type="STRING" id="251221.gene:10759073"/>
<dbReference type="EnsemblBacteria" id="BAC89525">
    <property type="protein sequence ID" value="BAC89525"/>
    <property type="gene ID" value="BAC89525"/>
</dbReference>
<dbReference type="KEGG" id="gvi:gll1584"/>
<dbReference type="PATRIC" id="fig|251221.4.peg.1621"/>
<dbReference type="eggNOG" id="COG1005">
    <property type="taxonomic scope" value="Bacteria"/>
</dbReference>
<dbReference type="HOGENOM" id="CLU_015134_0_1_3"/>
<dbReference type="InParanoid" id="Q7NK94"/>
<dbReference type="OrthoDB" id="9803734at2"/>
<dbReference type="PhylomeDB" id="Q7NK94"/>
<dbReference type="Proteomes" id="UP000000557">
    <property type="component" value="Chromosome"/>
</dbReference>
<dbReference type="GO" id="GO:0005886">
    <property type="term" value="C:plasma membrane"/>
    <property type="evidence" value="ECO:0007669"/>
    <property type="project" value="UniProtKB-SubCell"/>
</dbReference>
<dbReference type="GO" id="GO:0016655">
    <property type="term" value="F:oxidoreductase activity, acting on NAD(P)H, quinone or similar compound as acceptor"/>
    <property type="evidence" value="ECO:0007669"/>
    <property type="project" value="UniProtKB-UniRule"/>
</dbReference>
<dbReference type="GO" id="GO:0048038">
    <property type="term" value="F:quinone binding"/>
    <property type="evidence" value="ECO:0007669"/>
    <property type="project" value="UniProtKB-KW"/>
</dbReference>
<dbReference type="GO" id="GO:0009060">
    <property type="term" value="P:aerobic respiration"/>
    <property type="evidence" value="ECO:0000318"/>
    <property type="project" value="GO_Central"/>
</dbReference>
<dbReference type="GO" id="GO:0019684">
    <property type="term" value="P:photosynthesis, light reaction"/>
    <property type="evidence" value="ECO:0007669"/>
    <property type="project" value="UniProtKB-UniRule"/>
</dbReference>
<dbReference type="HAMAP" id="MF_01350">
    <property type="entry name" value="NDH1_NuoH"/>
    <property type="match status" value="1"/>
</dbReference>
<dbReference type="InterPro" id="IPR001694">
    <property type="entry name" value="NADH_UbQ_OxRdtase_su1/FPO"/>
</dbReference>
<dbReference type="InterPro" id="IPR018086">
    <property type="entry name" value="NADH_UbQ_OxRdtase_su1_CS"/>
</dbReference>
<dbReference type="NCBIfam" id="NF004741">
    <property type="entry name" value="PRK06076.1-2"/>
    <property type="match status" value="1"/>
</dbReference>
<dbReference type="NCBIfam" id="NF004744">
    <property type="entry name" value="PRK06076.1-5"/>
    <property type="match status" value="1"/>
</dbReference>
<dbReference type="PANTHER" id="PTHR11432">
    <property type="entry name" value="NADH DEHYDROGENASE SUBUNIT 1"/>
    <property type="match status" value="1"/>
</dbReference>
<dbReference type="PANTHER" id="PTHR11432:SF3">
    <property type="entry name" value="NADH-UBIQUINONE OXIDOREDUCTASE CHAIN 1"/>
    <property type="match status" value="1"/>
</dbReference>
<dbReference type="Pfam" id="PF00146">
    <property type="entry name" value="NADHdh"/>
    <property type="match status" value="1"/>
</dbReference>
<dbReference type="PROSITE" id="PS00667">
    <property type="entry name" value="COMPLEX1_ND1_1"/>
    <property type="match status" value="1"/>
</dbReference>
<dbReference type="PROSITE" id="PS00668">
    <property type="entry name" value="COMPLEX1_ND1_2"/>
    <property type="match status" value="1"/>
</dbReference>
<feature type="chain" id="PRO_0000240036" description="NAD(P)H-quinone oxidoreductase subunit 1">
    <location>
        <begin position="1"/>
        <end position="407"/>
    </location>
</feature>
<feature type="transmembrane region" description="Helical" evidence="1">
    <location>
        <begin position="28"/>
        <end position="48"/>
    </location>
</feature>
<feature type="transmembrane region" description="Helical" evidence="1">
    <location>
        <begin position="96"/>
        <end position="116"/>
    </location>
</feature>
<feature type="transmembrane region" description="Helical" evidence="1">
    <location>
        <begin position="127"/>
        <end position="147"/>
    </location>
</feature>
<feature type="transmembrane region" description="Helical" evidence="1">
    <location>
        <begin position="175"/>
        <end position="195"/>
    </location>
</feature>
<feature type="transmembrane region" description="Helical" evidence="1">
    <location>
        <begin position="203"/>
        <end position="223"/>
    </location>
</feature>
<feature type="transmembrane region" description="Helical" evidence="1">
    <location>
        <begin position="267"/>
        <end position="287"/>
    </location>
</feature>
<feature type="transmembrane region" description="Helical" evidence="1">
    <location>
        <begin position="309"/>
        <end position="329"/>
    </location>
</feature>
<feature type="transmembrane region" description="Helical" evidence="1">
    <location>
        <begin position="347"/>
        <end position="367"/>
    </location>
</feature>
<feature type="transmembrane region" description="Helical" evidence="1">
    <location>
        <begin position="374"/>
        <end position="394"/>
    </location>
</feature>
<protein>
    <recommendedName>
        <fullName evidence="1">NAD(P)H-quinone oxidoreductase subunit 1</fullName>
        <ecNumber evidence="1">7.1.1.-</ecNumber>
    </recommendedName>
    <alternativeName>
        <fullName evidence="1">NAD(P)H dehydrogenase I subunit 1</fullName>
    </alternativeName>
    <alternativeName>
        <fullName evidence="1">NDH-1 subunit 1</fullName>
    </alternativeName>
    <alternativeName>
        <fullName evidence="1">NDH-A</fullName>
    </alternativeName>
</protein>